<reference key="1">
    <citation type="submission" date="2009-04" db="EMBL/GenBank/DDBJ databases">
        <title>Genome sequence of Bacillus anthracis A0248.</title>
        <authorList>
            <person name="Dodson R.J."/>
            <person name="Munk A.C."/>
            <person name="Bruce D."/>
            <person name="Detter C."/>
            <person name="Tapia R."/>
            <person name="Sutton G."/>
            <person name="Sims D."/>
            <person name="Brettin T."/>
        </authorList>
    </citation>
    <scope>NUCLEOTIDE SEQUENCE [LARGE SCALE GENOMIC DNA]</scope>
    <source>
        <strain>A0248</strain>
    </source>
</reference>
<sequence>MFRIGQGFDVHEFAEGRPLIIGGITIPHEKGLIGHSDADVLLHTIADACLGAIAAGDIGKHFPDTDPAFKDADSAVLLQKVWEFVREQGYELGNLDCTIIAQKPKMAPHIESMRKRISELLETSIDNINVKATTTEKLGFTGREEGIASQAVVLLQKK</sequence>
<name>ISPF_BACAA</name>
<protein>
    <recommendedName>
        <fullName evidence="1">2-C-methyl-D-erythritol 2,4-cyclodiphosphate synthase</fullName>
        <shortName evidence="1">MECDP-synthase</shortName>
        <shortName evidence="1">MECPP-synthase</shortName>
        <shortName evidence="1">MECPS</shortName>
        <ecNumber evidence="1">4.6.1.12</ecNumber>
    </recommendedName>
</protein>
<comment type="function">
    <text evidence="1">Involved in the biosynthesis of isopentenyl diphosphate (IPP) and dimethylallyl diphosphate (DMAPP), two major building blocks of isoprenoid compounds. Catalyzes the conversion of 4-diphosphocytidyl-2-C-methyl-D-erythritol 2-phosphate (CDP-ME2P) to 2-C-methyl-D-erythritol 2,4-cyclodiphosphate (ME-CPP) with a corresponding release of cytidine 5-monophosphate (CMP).</text>
</comment>
<comment type="catalytic activity">
    <reaction evidence="1">
        <text>4-CDP-2-C-methyl-D-erythritol 2-phosphate = 2-C-methyl-D-erythritol 2,4-cyclic diphosphate + CMP</text>
        <dbReference type="Rhea" id="RHEA:23864"/>
        <dbReference type="ChEBI" id="CHEBI:57919"/>
        <dbReference type="ChEBI" id="CHEBI:58483"/>
        <dbReference type="ChEBI" id="CHEBI:60377"/>
        <dbReference type="EC" id="4.6.1.12"/>
    </reaction>
</comment>
<comment type="cofactor">
    <cofactor evidence="1">
        <name>a divalent metal cation</name>
        <dbReference type="ChEBI" id="CHEBI:60240"/>
    </cofactor>
    <text evidence="1">Binds 1 divalent metal cation per subunit.</text>
</comment>
<comment type="pathway">
    <text evidence="1">Isoprenoid biosynthesis; isopentenyl diphosphate biosynthesis via DXP pathway; isopentenyl diphosphate from 1-deoxy-D-xylulose 5-phosphate: step 4/6.</text>
</comment>
<comment type="subunit">
    <text evidence="1">Homotrimer.</text>
</comment>
<comment type="similarity">
    <text evidence="1">Belongs to the IspF family.</text>
</comment>
<evidence type="ECO:0000255" key="1">
    <source>
        <dbReference type="HAMAP-Rule" id="MF_00107"/>
    </source>
</evidence>
<keyword id="KW-0414">Isoprene biosynthesis</keyword>
<keyword id="KW-0456">Lyase</keyword>
<keyword id="KW-0479">Metal-binding</keyword>
<organism>
    <name type="scientific">Bacillus anthracis (strain A0248)</name>
    <dbReference type="NCBI Taxonomy" id="592021"/>
    <lineage>
        <taxon>Bacteria</taxon>
        <taxon>Bacillati</taxon>
        <taxon>Bacillota</taxon>
        <taxon>Bacilli</taxon>
        <taxon>Bacillales</taxon>
        <taxon>Bacillaceae</taxon>
        <taxon>Bacillus</taxon>
        <taxon>Bacillus cereus group</taxon>
    </lineage>
</organism>
<gene>
    <name evidence="1" type="primary">ispF</name>
    <name type="ordered locus">BAA_0102</name>
</gene>
<proteinExistence type="inferred from homology"/>
<dbReference type="EC" id="4.6.1.12" evidence="1"/>
<dbReference type="EMBL" id="CP001598">
    <property type="protein sequence ID" value="ACQ47438.1"/>
    <property type="molecule type" value="Genomic_DNA"/>
</dbReference>
<dbReference type="RefSeq" id="WP_000488386.1">
    <property type="nucleotide sequence ID" value="NC_012659.1"/>
</dbReference>
<dbReference type="SMR" id="C3P9N2"/>
<dbReference type="GeneID" id="93010967"/>
<dbReference type="KEGG" id="bai:BAA_0102"/>
<dbReference type="HOGENOM" id="CLU_084630_2_0_9"/>
<dbReference type="UniPathway" id="UPA00056">
    <property type="reaction ID" value="UER00095"/>
</dbReference>
<dbReference type="GO" id="GO:0008685">
    <property type="term" value="F:2-C-methyl-D-erythritol 2,4-cyclodiphosphate synthase activity"/>
    <property type="evidence" value="ECO:0007669"/>
    <property type="project" value="UniProtKB-UniRule"/>
</dbReference>
<dbReference type="GO" id="GO:0046872">
    <property type="term" value="F:metal ion binding"/>
    <property type="evidence" value="ECO:0007669"/>
    <property type="project" value="UniProtKB-KW"/>
</dbReference>
<dbReference type="GO" id="GO:0019288">
    <property type="term" value="P:isopentenyl diphosphate biosynthetic process, methylerythritol 4-phosphate pathway"/>
    <property type="evidence" value="ECO:0007669"/>
    <property type="project" value="UniProtKB-UniRule"/>
</dbReference>
<dbReference type="GO" id="GO:0016114">
    <property type="term" value="P:terpenoid biosynthetic process"/>
    <property type="evidence" value="ECO:0007669"/>
    <property type="project" value="InterPro"/>
</dbReference>
<dbReference type="CDD" id="cd00554">
    <property type="entry name" value="MECDP_synthase"/>
    <property type="match status" value="1"/>
</dbReference>
<dbReference type="FunFam" id="3.30.1330.50:FF:000001">
    <property type="entry name" value="2-C-methyl-D-erythritol 2,4-cyclodiphosphate synthase"/>
    <property type="match status" value="1"/>
</dbReference>
<dbReference type="Gene3D" id="3.30.1330.50">
    <property type="entry name" value="2-C-methyl-D-erythritol 2,4-cyclodiphosphate synthase"/>
    <property type="match status" value="1"/>
</dbReference>
<dbReference type="HAMAP" id="MF_00107">
    <property type="entry name" value="IspF"/>
    <property type="match status" value="1"/>
</dbReference>
<dbReference type="InterPro" id="IPR003526">
    <property type="entry name" value="MECDP_synthase"/>
</dbReference>
<dbReference type="InterPro" id="IPR020555">
    <property type="entry name" value="MECDP_synthase_CS"/>
</dbReference>
<dbReference type="InterPro" id="IPR036571">
    <property type="entry name" value="MECDP_synthase_sf"/>
</dbReference>
<dbReference type="NCBIfam" id="TIGR00151">
    <property type="entry name" value="ispF"/>
    <property type="match status" value="1"/>
</dbReference>
<dbReference type="PANTHER" id="PTHR43181">
    <property type="entry name" value="2-C-METHYL-D-ERYTHRITOL 2,4-CYCLODIPHOSPHATE SYNTHASE, CHLOROPLASTIC"/>
    <property type="match status" value="1"/>
</dbReference>
<dbReference type="PANTHER" id="PTHR43181:SF1">
    <property type="entry name" value="2-C-METHYL-D-ERYTHRITOL 2,4-CYCLODIPHOSPHATE SYNTHASE, CHLOROPLASTIC"/>
    <property type="match status" value="1"/>
</dbReference>
<dbReference type="Pfam" id="PF02542">
    <property type="entry name" value="YgbB"/>
    <property type="match status" value="1"/>
</dbReference>
<dbReference type="SUPFAM" id="SSF69765">
    <property type="entry name" value="IpsF-like"/>
    <property type="match status" value="1"/>
</dbReference>
<dbReference type="PROSITE" id="PS01350">
    <property type="entry name" value="ISPF"/>
    <property type="match status" value="1"/>
</dbReference>
<feature type="chain" id="PRO_1000118991" description="2-C-methyl-D-erythritol 2,4-cyclodiphosphate synthase">
    <location>
        <begin position="1"/>
        <end position="158"/>
    </location>
</feature>
<feature type="binding site" evidence="1">
    <location>
        <begin position="9"/>
        <end position="11"/>
    </location>
    <ligand>
        <name>4-CDP-2-C-methyl-D-erythritol 2-phosphate</name>
        <dbReference type="ChEBI" id="CHEBI:57919"/>
    </ligand>
</feature>
<feature type="binding site" evidence="1">
    <location>
        <position position="9"/>
    </location>
    <ligand>
        <name>a divalent metal cation</name>
        <dbReference type="ChEBI" id="CHEBI:60240"/>
    </ligand>
</feature>
<feature type="binding site" evidence="1">
    <location>
        <position position="11"/>
    </location>
    <ligand>
        <name>a divalent metal cation</name>
        <dbReference type="ChEBI" id="CHEBI:60240"/>
    </ligand>
</feature>
<feature type="binding site" evidence="1">
    <location>
        <begin position="35"/>
        <end position="36"/>
    </location>
    <ligand>
        <name>4-CDP-2-C-methyl-D-erythritol 2-phosphate</name>
        <dbReference type="ChEBI" id="CHEBI:57919"/>
    </ligand>
</feature>
<feature type="binding site" evidence="1">
    <location>
        <position position="43"/>
    </location>
    <ligand>
        <name>a divalent metal cation</name>
        <dbReference type="ChEBI" id="CHEBI:60240"/>
    </ligand>
</feature>
<feature type="binding site" evidence="1">
    <location>
        <begin position="57"/>
        <end position="59"/>
    </location>
    <ligand>
        <name>4-CDP-2-C-methyl-D-erythritol 2-phosphate</name>
        <dbReference type="ChEBI" id="CHEBI:57919"/>
    </ligand>
</feature>
<feature type="binding site" evidence="1">
    <location>
        <begin position="62"/>
        <end position="66"/>
    </location>
    <ligand>
        <name>4-CDP-2-C-methyl-D-erythritol 2-phosphate</name>
        <dbReference type="ChEBI" id="CHEBI:57919"/>
    </ligand>
</feature>
<feature type="binding site" evidence="1">
    <location>
        <begin position="101"/>
        <end position="107"/>
    </location>
    <ligand>
        <name>4-CDP-2-C-methyl-D-erythritol 2-phosphate</name>
        <dbReference type="ChEBI" id="CHEBI:57919"/>
    </ligand>
</feature>
<feature type="binding site" evidence="1">
    <location>
        <begin position="133"/>
        <end position="136"/>
    </location>
    <ligand>
        <name>4-CDP-2-C-methyl-D-erythritol 2-phosphate</name>
        <dbReference type="ChEBI" id="CHEBI:57919"/>
    </ligand>
</feature>
<feature type="binding site" evidence="1">
    <location>
        <position position="140"/>
    </location>
    <ligand>
        <name>4-CDP-2-C-methyl-D-erythritol 2-phosphate</name>
        <dbReference type="ChEBI" id="CHEBI:57919"/>
    </ligand>
</feature>
<feature type="binding site" evidence="1">
    <location>
        <position position="143"/>
    </location>
    <ligand>
        <name>4-CDP-2-C-methyl-D-erythritol 2-phosphate</name>
        <dbReference type="ChEBI" id="CHEBI:57919"/>
    </ligand>
</feature>
<feature type="site" description="Transition state stabilizer" evidence="1">
    <location>
        <position position="35"/>
    </location>
</feature>
<feature type="site" description="Transition state stabilizer" evidence="1">
    <location>
        <position position="134"/>
    </location>
</feature>
<accession>C3P9N2</accession>